<name>RRP36_MYCMD</name>
<protein>
    <recommendedName>
        <fullName>rRNA biogenesis protein RRP36</fullName>
    </recommendedName>
    <alternativeName>
        <fullName>Ribosomal RNA-processing protein 36</fullName>
    </alternativeName>
</protein>
<reference key="1">
    <citation type="journal article" date="2006" name="Nature">
        <title>Insights from the genome of the biotrophic fungal plant pathogen Ustilago maydis.</title>
        <authorList>
            <person name="Kaemper J."/>
            <person name="Kahmann R."/>
            <person name="Boelker M."/>
            <person name="Ma L.-J."/>
            <person name="Brefort T."/>
            <person name="Saville B.J."/>
            <person name="Banuett F."/>
            <person name="Kronstad J.W."/>
            <person name="Gold S.E."/>
            <person name="Mueller O."/>
            <person name="Perlin M.H."/>
            <person name="Woesten H.A.B."/>
            <person name="de Vries R."/>
            <person name="Ruiz-Herrera J."/>
            <person name="Reynaga-Pena C.G."/>
            <person name="Snetselaar K."/>
            <person name="McCann M."/>
            <person name="Perez-Martin J."/>
            <person name="Feldbruegge M."/>
            <person name="Basse C.W."/>
            <person name="Steinberg G."/>
            <person name="Ibeas J.I."/>
            <person name="Holloman W."/>
            <person name="Guzman P."/>
            <person name="Farman M.L."/>
            <person name="Stajich J.E."/>
            <person name="Sentandreu R."/>
            <person name="Gonzalez-Prieto J.M."/>
            <person name="Kennell J.C."/>
            <person name="Molina L."/>
            <person name="Schirawski J."/>
            <person name="Mendoza-Mendoza A."/>
            <person name="Greilinger D."/>
            <person name="Muench K."/>
            <person name="Roessel N."/>
            <person name="Scherer M."/>
            <person name="Vranes M."/>
            <person name="Ladendorf O."/>
            <person name="Vincon V."/>
            <person name="Fuchs U."/>
            <person name="Sandrock B."/>
            <person name="Meng S."/>
            <person name="Ho E.C.H."/>
            <person name="Cahill M.J."/>
            <person name="Boyce K.J."/>
            <person name="Klose J."/>
            <person name="Klosterman S.J."/>
            <person name="Deelstra H.J."/>
            <person name="Ortiz-Castellanos L."/>
            <person name="Li W."/>
            <person name="Sanchez-Alonso P."/>
            <person name="Schreier P.H."/>
            <person name="Haeuser-Hahn I."/>
            <person name="Vaupel M."/>
            <person name="Koopmann E."/>
            <person name="Friedrich G."/>
            <person name="Voss H."/>
            <person name="Schlueter T."/>
            <person name="Margolis J."/>
            <person name="Platt D."/>
            <person name="Swimmer C."/>
            <person name="Gnirke A."/>
            <person name="Chen F."/>
            <person name="Vysotskaia V."/>
            <person name="Mannhaupt G."/>
            <person name="Gueldener U."/>
            <person name="Muensterkoetter M."/>
            <person name="Haase D."/>
            <person name="Oesterheld M."/>
            <person name="Mewes H.-W."/>
            <person name="Mauceli E.W."/>
            <person name="DeCaprio D."/>
            <person name="Wade C.M."/>
            <person name="Butler J."/>
            <person name="Young S.K."/>
            <person name="Jaffe D.B."/>
            <person name="Calvo S.E."/>
            <person name="Nusbaum C."/>
            <person name="Galagan J.E."/>
            <person name="Birren B.W."/>
        </authorList>
    </citation>
    <scope>NUCLEOTIDE SEQUENCE [LARGE SCALE GENOMIC DNA]</scope>
    <source>
        <strain>DSM 14603 / FGSC 9021 / UM521</strain>
    </source>
</reference>
<reference key="2">
    <citation type="submission" date="2014-09" db="EMBL/GenBank/DDBJ databases">
        <authorList>
            <person name="Gueldener U."/>
            <person name="Muensterkoetter M."/>
            <person name="Walter M.C."/>
            <person name="Mannhaupt G."/>
            <person name="Kahmann R."/>
        </authorList>
    </citation>
    <scope>GENOME REANNOTATION</scope>
    <source>
        <strain>DSM 14603 / FGSC 9021 / UM521</strain>
    </source>
</reference>
<comment type="function">
    <text evidence="1">Component of the 90S pre-ribosome involved in the maturation of rRNAs. Required for early cleavages of the pre-RNAs in the 40S ribosomal subunit maturation pathway (By similarity).</text>
</comment>
<comment type="subunit">
    <text evidence="1">Associates with 90S and pre-40S pre-ribosomal particles.</text>
</comment>
<comment type="subcellular location">
    <subcellularLocation>
        <location evidence="1">Nucleus</location>
        <location evidence="1">Nucleolus</location>
    </subcellularLocation>
</comment>
<comment type="similarity">
    <text evidence="4">Belongs to the RRP36 family.</text>
</comment>
<organism>
    <name type="scientific">Mycosarcoma maydis</name>
    <name type="common">Corn smut fungus</name>
    <name type="synonym">Ustilago maydis</name>
    <dbReference type="NCBI Taxonomy" id="5270"/>
    <lineage>
        <taxon>Eukaryota</taxon>
        <taxon>Fungi</taxon>
        <taxon>Dikarya</taxon>
        <taxon>Basidiomycota</taxon>
        <taxon>Ustilaginomycotina</taxon>
        <taxon>Ustilaginomycetes</taxon>
        <taxon>Ustilaginales</taxon>
        <taxon>Ustilaginaceae</taxon>
        <taxon>Mycosarcoma</taxon>
    </lineage>
</organism>
<feature type="chain" id="PRO_0000397666" description="rRNA biogenesis protein RRP36">
    <location>
        <begin position="1"/>
        <end position="477"/>
    </location>
</feature>
<feature type="region of interest" description="Disordered" evidence="3">
    <location>
        <begin position="1"/>
        <end position="286"/>
    </location>
</feature>
<feature type="region of interest" description="Disordered" evidence="3">
    <location>
        <begin position="353"/>
        <end position="377"/>
    </location>
</feature>
<feature type="region of interest" description="Disordered" evidence="3">
    <location>
        <begin position="403"/>
        <end position="477"/>
    </location>
</feature>
<feature type="coiled-coil region" evidence="2">
    <location>
        <begin position="185"/>
        <end position="253"/>
    </location>
</feature>
<feature type="coiled-coil region" evidence="2">
    <location>
        <begin position="333"/>
        <end position="361"/>
    </location>
</feature>
<feature type="compositionally biased region" description="Polar residues" evidence="3">
    <location>
        <begin position="1"/>
        <end position="10"/>
    </location>
</feature>
<feature type="compositionally biased region" description="Acidic residues" evidence="3">
    <location>
        <begin position="47"/>
        <end position="66"/>
    </location>
</feature>
<feature type="compositionally biased region" description="Acidic residues" evidence="3">
    <location>
        <begin position="75"/>
        <end position="95"/>
    </location>
</feature>
<feature type="compositionally biased region" description="Acidic residues" evidence="3">
    <location>
        <begin position="103"/>
        <end position="112"/>
    </location>
</feature>
<feature type="compositionally biased region" description="Acidic residues" evidence="3">
    <location>
        <begin position="138"/>
        <end position="158"/>
    </location>
</feature>
<feature type="compositionally biased region" description="Basic and acidic residues" evidence="3">
    <location>
        <begin position="186"/>
        <end position="203"/>
    </location>
</feature>
<feature type="compositionally biased region" description="Low complexity" evidence="3">
    <location>
        <begin position="206"/>
        <end position="219"/>
    </location>
</feature>
<feature type="compositionally biased region" description="Basic and acidic residues" evidence="3">
    <location>
        <begin position="226"/>
        <end position="247"/>
    </location>
</feature>
<feature type="compositionally biased region" description="Basic and acidic residues" evidence="3">
    <location>
        <begin position="353"/>
        <end position="369"/>
    </location>
</feature>
<feature type="compositionally biased region" description="Basic and acidic residues" evidence="3">
    <location>
        <begin position="414"/>
        <end position="424"/>
    </location>
</feature>
<feature type="compositionally biased region" description="Basic residues" evidence="3">
    <location>
        <begin position="425"/>
        <end position="437"/>
    </location>
</feature>
<sequence>MAKGSHNSSVARPKPKAATVFEQDSDGSDTRSLQLDSGSELGSDMGESADEEEEEEEEEEEEEEEEQPKYAQFMDDSDLEDATDDESEDENEDDVEHGAYSIEEADSDDEQDDLRQQMNKLPFSALMKAKQQMNGFSSDDDQDVFSEPDISDLEEDEFAQDRQRLAAAKAGKRPDCKSNGSSNSSRSEEALEQKRLEVRERLRQLKGGSTSTVGSSSKGAADEAWAEARKQREQRRKDANQRKELAKRSNKNAPTEISSKRPVSRRRNVIETASSQVRDPRFESLSGSVNKDLFAKSYSFLPEMFKDELGTLKKTLTKLKKLEAAQAGPKAKSEQALAIREERAKVEAALRRAEGLAGERERRARESAVKGKIKSQNKERVEKGLLPFYPKKSEIKQMLLKDKYDRLSGGGNQEGKRASGQEKKQLKKALERRRKKNAQKEKRDMPAGIGFAREGNGALPKRKRNTAGGDSNKRARF</sequence>
<proteinExistence type="inferred from homology"/>
<keyword id="KW-0175">Coiled coil</keyword>
<keyword id="KW-0539">Nucleus</keyword>
<keyword id="KW-1185">Reference proteome</keyword>
<keyword id="KW-0687">Ribonucleoprotein</keyword>
<keyword id="KW-0690">Ribosome biogenesis</keyword>
<keyword id="KW-0698">rRNA processing</keyword>
<accession>Q4PI84</accession>
<accession>A0A0D1E762</accession>
<evidence type="ECO:0000250" key="1"/>
<evidence type="ECO:0000255" key="2"/>
<evidence type="ECO:0000256" key="3">
    <source>
        <dbReference type="SAM" id="MobiDB-lite"/>
    </source>
</evidence>
<evidence type="ECO:0000305" key="4"/>
<dbReference type="EMBL" id="CM003140">
    <property type="protein sequence ID" value="KIS71744.1"/>
    <property type="molecule type" value="Genomic_DNA"/>
</dbReference>
<dbReference type="RefSeq" id="XP_011386121.1">
    <property type="nucleotide sequence ID" value="XM_011387819.1"/>
</dbReference>
<dbReference type="SMR" id="Q4PI84"/>
<dbReference type="STRING" id="237631.Q4PI84"/>
<dbReference type="EnsemblFungi" id="KIS71744">
    <property type="protein sequence ID" value="KIS71744"/>
    <property type="gene ID" value="UMAG_00179"/>
</dbReference>
<dbReference type="GeneID" id="23561554"/>
<dbReference type="KEGG" id="uma:UMAG_00179"/>
<dbReference type="VEuPathDB" id="FungiDB:UMAG_00179"/>
<dbReference type="eggNOG" id="KOG3190">
    <property type="taxonomic scope" value="Eukaryota"/>
</dbReference>
<dbReference type="HOGENOM" id="CLU_581659_0_0_1"/>
<dbReference type="InParanoid" id="Q4PI84"/>
<dbReference type="OMA" id="HMKSKQR"/>
<dbReference type="OrthoDB" id="448446at2759"/>
<dbReference type="Proteomes" id="UP000000561">
    <property type="component" value="Chromosome 1"/>
</dbReference>
<dbReference type="GO" id="GO:0030686">
    <property type="term" value="C:90S preribosome"/>
    <property type="evidence" value="ECO:0000318"/>
    <property type="project" value="GO_Central"/>
</dbReference>
<dbReference type="GO" id="GO:0005730">
    <property type="term" value="C:nucleolus"/>
    <property type="evidence" value="ECO:0000318"/>
    <property type="project" value="GO_Central"/>
</dbReference>
<dbReference type="GO" id="GO:0000462">
    <property type="term" value="P:maturation of SSU-rRNA from tricistronic rRNA transcript (SSU-rRNA, 5.8S rRNA, LSU-rRNA)"/>
    <property type="evidence" value="ECO:0000318"/>
    <property type="project" value="GO_Central"/>
</dbReference>
<dbReference type="InterPro" id="IPR009292">
    <property type="entry name" value="RRP36"/>
</dbReference>
<dbReference type="PANTHER" id="PTHR21738">
    <property type="entry name" value="RIBOSOMAL RNA PROCESSING PROTEIN 36 HOMOLOG"/>
    <property type="match status" value="1"/>
</dbReference>
<dbReference type="PANTHER" id="PTHR21738:SF0">
    <property type="entry name" value="RIBOSOMAL RNA PROCESSING PROTEIN 36 HOMOLOG"/>
    <property type="match status" value="1"/>
</dbReference>
<dbReference type="Pfam" id="PF06102">
    <property type="entry name" value="RRP36"/>
    <property type="match status" value="1"/>
</dbReference>
<gene>
    <name type="primary">RRP36</name>
    <name type="ORF">UMAG_00179</name>
</gene>